<feature type="chain" id="PRO_0000222893" description="Movement protein p22">
    <location>
        <begin position="1"/>
        <end position="189"/>
    </location>
</feature>
<sequence length="189" mass="21552">MDTEYEQVNKPWNELYKETTLGNKLTVNVGMEDQEVPLLPSNFLTKVRVGLSGGYITMRRIRIKIIPLVSRKAGVSGKLYLRDISDTTGRKLHCTESLDLGQEIRLTMQHLDFSVSTRSDVPIVFGFEELVSPFLEGRELFSISVRWQFGLSKNCYSLPQSKWKVMYQEDALKVLKPSKKKASKTDSSV</sequence>
<gene>
    <name type="ORF">ORF3</name>
</gene>
<evidence type="ECO:0000250" key="1"/>
<evidence type="ECO:0000305" key="2"/>
<dbReference type="EMBL" id="Z68898">
    <property type="protein sequence ID" value="CAA93129.1"/>
    <property type="molecule type" value="Genomic_RNA"/>
</dbReference>
<dbReference type="GO" id="GO:0033644">
    <property type="term" value="C:host cell membrane"/>
    <property type="evidence" value="ECO:0007669"/>
    <property type="project" value="UniProtKB-SubCell"/>
</dbReference>
<dbReference type="GO" id="GO:0016020">
    <property type="term" value="C:membrane"/>
    <property type="evidence" value="ECO:0007669"/>
    <property type="project" value="UniProtKB-KW"/>
</dbReference>
<dbReference type="GO" id="GO:0019028">
    <property type="term" value="C:viral capsid"/>
    <property type="evidence" value="ECO:0007669"/>
    <property type="project" value="InterPro"/>
</dbReference>
<dbReference type="GO" id="GO:0003723">
    <property type="term" value="F:RNA binding"/>
    <property type="evidence" value="ECO:0007669"/>
    <property type="project" value="UniProtKB-KW"/>
</dbReference>
<dbReference type="GO" id="GO:0046740">
    <property type="term" value="P:transport of virus in host, cell to cell"/>
    <property type="evidence" value="ECO:0007669"/>
    <property type="project" value="UniProtKB-KW"/>
</dbReference>
<dbReference type="InterPro" id="IPR005332">
    <property type="entry name" value="TBSV_p22"/>
</dbReference>
<dbReference type="Pfam" id="PF03558">
    <property type="entry name" value="TBSV_P22"/>
    <property type="match status" value="1"/>
</dbReference>
<proteinExistence type="inferred from homology"/>
<organismHost>
    <name type="scientific">Capsicum annuum</name>
    <name type="common">Capsicum pepper</name>
    <dbReference type="NCBI Taxonomy" id="4072"/>
</organismHost>
<organismHost>
    <name type="scientific">Malus</name>
    <dbReference type="NCBI Taxonomy" id="3749"/>
</organismHost>
<organismHost>
    <name type="scientific">Pyrus</name>
    <name type="common">pears</name>
    <dbReference type="NCBI Taxonomy" id="3766"/>
</organismHost>
<organismHost>
    <name type="scientific">Solanum lycopersicum</name>
    <name type="common">Tomato</name>
    <name type="synonym">Lycopersicon esculentum</name>
    <dbReference type="NCBI Taxonomy" id="4081"/>
</organismHost>
<organismHost>
    <name type="scientific">Solanum melongena</name>
    <name type="common">eggplant</name>
    <dbReference type="NCBI Taxonomy" id="4111"/>
</organismHost>
<organismHost>
    <name type="scientific">Tolmiea menziesii</name>
    <dbReference type="NCBI Taxonomy" id="29777"/>
</organismHost>
<organismHost>
    <name type="scientific">Tulipa</name>
    <dbReference type="NCBI Taxonomy" id="13305"/>
</organismHost>
<keyword id="KW-1043">Host membrane</keyword>
<keyword id="KW-0945">Host-virus interaction</keyword>
<keyword id="KW-0472">Membrane</keyword>
<keyword id="KW-0597">Phosphoprotein</keyword>
<keyword id="KW-0694">RNA-binding</keyword>
<keyword id="KW-0813">Transport</keyword>
<keyword id="KW-0916">Viral movement protein</keyword>
<reference key="1">
    <citation type="journal article" date="1996" name="Phytopathology">
        <title>Different tomato bushy stunt virus strains cause disease outbreaks on solanaceous crops in Spain.</title>
        <authorList>
            <person name="Luis-Areteaga M."/>
            <person name="Rodriguez-Cerezo E."/>
            <person name="Fraile A."/>
            <person name="Saez E."/>
            <person name="Garcia-Arenal F."/>
        </authorList>
        <dbReference type="AGRICOLA" id="IND20581771"/>
    </citation>
    <scope>NUCLEOTIDE SEQUENCE [GENOMIC RNA]</scope>
</reference>
<name>MP22_TBSVK</name>
<protein>
    <recommendedName>
        <fullName>Movement protein p22</fullName>
    </recommendedName>
    <alternativeName>
        <fullName>p21</fullName>
    </alternativeName>
</protein>
<accession>P50633</accession>
<comment type="function">
    <text evidence="1">Cell-to-cell movement. Displays RNA-binding activity (By similarity).</text>
</comment>
<comment type="subunit">
    <text evidence="1">Interacts with host protein HFI22.</text>
</comment>
<comment type="subcellular location">
    <subcellularLocation>
        <location evidence="1">Host membrane</location>
    </subcellularLocation>
</comment>
<comment type="PTM">
    <text evidence="1">Phosphorylated.</text>
</comment>
<comment type="similarity">
    <text evidence="2">Belongs to the tombusvirus/aureusvirus movement protein p22 family.</text>
</comment>
<organism>
    <name type="scientific">Tomato bushy stunt virus (strain Ja9)</name>
    <name type="common">TBSV</name>
    <dbReference type="NCBI Taxonomy" id="70158"/>
    <lineage>
        <taxon>Viruses</taxon>
        <taxon>Riboviria</taxon>
        <taxon>Orthornavirae</taxon>
        <taxon>Kitrinoviricota</taxon>
        <taxon>Tolucaviricetes</taxon>
        <taxon>Tolivirales</taxon>
        <taxon>Tombusviridae</taxon>
        <taxon>Procedovirinae</taxon>
        <taxon>Tombusvirus</taxon>
        <taxon>Tombusvirus lycopersici</taxon>
    </lineage>
</organism>